<feature type="chain" id="PRO_0000252616" description="Glucose-6-phosphate isomerase 2">
    <location>
        <begin position="1"/>
        <end position="559"/>
    </location>
</feature>
<feature type="active site" description="Proton donor" evidence="1">
    <location>
        <position position="367"/>
    </location>
</feature>
<feature type="active site" evidence="1">
    <location>
        <position position="398"/>
    </location>
</feature>
<feature type="active site" evidence="1">
    <location>
        <position position="522"/>
    </location>
</feature>
<comment type="function">
    <text evidence="1">Catalyzes the reversible isomerization of glucose-6-phosphate to fructose-6-phosphate.</text>
</comment>
<comment type="catalytic activity">
    <reaction evidence="1">
        <text>alpha-D-glucose 6-phosphate = beta-D-fructose 6-phosphate</text>
        <dbReference type="Rhea" id="RHEA:11816"/>
        <dbReference type="ChEBI" id="CHEBI:57634"/>
        <dbReference type="ChEBI" id="CHEBI:58225"/>
        <dbReference type="EC" id="5.3.1.9"/>
    </reaction>
</comment>
<comment type="pathway">
    <text evidence="1">Carbohydrate biosynthesis; gluconeogenesis.</text>
</comment>
<comment type="pathway">
    <text evidence="1">Carbohydrate degradation; glycolysis; D-glyceraldehyde 3-phosphate and glycerone phosphate from D-glucose: step 2/4.</text>
</comment>
<comment type="subcellular location">
    <subcellularLocation>
        <location evidence="1">Cytoplasm</location>
    </subcellularLocation>
</comment>
<comment type="similarity">
    <text evidence="1">Belongs to the GPI family.</text>
</comment>
<accession>Q1QUG5</accession>
<name>G6PI2_CHRSD</name>
<evidence type="ECO:0000255" key="1">
    <source>
        <dbReference type="HAMAP-Rule" id="MF_00473"/>
    </source>
</evidence>
<reference key="1">
    <citation type="journal article" date="2011" name="Stand. Genomic Sci.">
        <title>Complete genome sequence of the halophilic and highly halotolerant Chromohalobacter salexigens type strain (1H11(T)).</title>
        <authorList>
            <person name="Copeland A."/>
            <person name="O'Connor K."/>
            <person name="Lucas S."/>
            <person name="Lapidus A."/>
            <person name="Berry K.W."/>
            <person name="Detter J.C."/>
            <person name="Del Rio T.G."/>
            <person name="Hammon N."/>
            <person name="Dalin E."/>
            <person name="Tice H."/>
            <person name="Pitluck S."/>
            <person name="Bruce D."/>
            <person name="Goodwin L."/>
            <person name="Han C."/>
            <person name="Tapia R."/>
            <person name="Saunders E."/>
            <person name="Schmutz J."/>
            <person name="Brettin T."/>
            <person name="Larimer F."/>
            <person name="Land M."/>
            <person name="Hauser L."/>
            <person name="Vargas C."/>
            <person name="Nieto J.J."/>
            <person name="Kyrpides N.C."/>
            <person name="Ivanova N."/>
            <person name="Goker M."/>
            <person name="Klenk H.P."/>
            <person name="Csonka L.N."/>
            <person name="Woyke T."/>
        </authorList>
    </citation>
    <scope>NUCLEOTIDE SEQUENCE [LARGE SCALE GENOMIC DNA]</scope>
    <source>
        <strain>ATCC BAA-138 / DSM 3043 / CIP 106854 / NCIMB 13768 / 1H11</strain>
    </source>
</reference>
<gene>
    <name evidence="1" type="primary">pgi2</name>
    <name type="ordered locus">Csal_2546</name>
</gene>
<dbReference type="EC" id="5.3.1.9" evidence="1"/>
<dbReference type="EMBL" id="CP000285">
    <property type="protein sequence ID" value="ABE59893.1"/>
    <property type="molecule type" value="Genomic_DNA"/>
</dbReference>
<dbReference type="RefSeq" id="WP_011507839.1">
    <property type="nucleotide sequence ID" value="NC_007963.1"/>
</dbReference>
<dbReference type="SMR" id="Q1QUG5"/>
<dbReference type="STRING" id="290398.Csal_2546"/>
<dbReference type="GeneID" id="95335250"/>
<dbReference type="KEGG" id="csa:Csal_2546"/>
<dbReference type="eggNOG" id="COG0166">
    <property type="taxonomic scope" value="Bacteria"/>
</dbReference>
<dbReference type="HOGENOM" id="CLU_017947_3_1_6"/>
<dbReference type="OrthoDB" id="140919at2"/>
<dbReference type="UniPathway" id="UPA00109">
    <property type="reaction ID" value="UER00181"/>
</dbReference>
<dbReference type="UniPathway" id="UPA00138"/>
<dbReference type="Proteomes" id="UP000000239">
    <property type="component" value="Chromosome"/>
</dbReference>
<dbReference type="GO" id="GO:0005829">
    <property type="term" value="C:cytosol"/>
    <property type="evidence" value="ECO:0007669"/>
    <property type="project" value="TreeGrafter"/>
</dbReference>
<dbReference type="GO" id="GO:0097367">
    <property type="term" value="F:carbohydrate derivative binding"/>
    <property type="evidence" value="ECO:0007669"/>
    <property type="project" value="InterPro"/>
</dbReference>
<dbReference type="GO" id="GO:0004347">
    <property type="term" value="F:glucose-6-phosphate isomerase activity"/>
    <property type="evidence" value="ECO:0007669"/>
    <property type="project" value="UniProtKB-UniRule"/>
</dbReference>
<dbReference type="GO" id="GO:0048029">
    <property type="term" value="F:monosaccharide binding"/>
    <property type="evidence" value="ECO:0007669"/>
    <property type="project" value="TreeGrafter"/>
</dbReference>
<dbReference type="GO" id="GO:0006094">
    <property type="term" value="P:gluconeogenesis"/>
    <property type="evidence" value="ECO:0007669"/>
    <property type="project" value="UniProtKB-UniRule"/>
</dbReference>
<dbReference type="GO" id="GO:0051156">
    <property type="term" value="P:glucose 6-phosphate metabolic process"/>
    <property type="evidence" value="ECO:0007669"/>
    <property type="project" value="TreeGrafter"/>
</dbReference>
<dbReference type="GO" id="GO:0006096">
    <property type="term" value="P:glycolytic process"/>
    <property type="evidence" value="ECO:0007669"/>
    <property type="project" value="UniProtKB-UniRule"/>
</dbReference>
<dbReference type="CDD" id="cd05015">
    <property type="entry name" value="SIS_PGI_1"/>
    <property type="match status" value="1"/>
</dbReference>
<dbReference type="CDD" id="cd05016">
    <property type="entry name" value="SIS_PGI_2"/>
    <property type="match status" value="1"/>
</dbReference>
<dbReference type="Gene3D" id="1.10.1390.10">
    <property type="match status" value="1"/>
</dbReference>
<dbReference type="Gene3D" id="3.40.50.10490">
    <property type="entry name" value="Glucose-6-phosphate isomerase like protein, domain 1"/>
    <property type="match status" value="2"/>
</dbReference>
<dbReference type="HAMAP" id="MF_00473">
    <property type="entry name" value="G6P_isomerase"/>
    <property type="match status" value="1"/>
</dbReference>
<dbReference type="InterPro" id="IPR001672">
    <property type="entry name" value="G6P_Isomerase"/>
</dbReference>
<dbReference type="InterPro" id="IPR023096">
    <property type="entry name" value="G6P_Isomerase_C"/>
</dbReference>
<dbReference type="InterPro" id="IPR018189">
    <property type="entry name" value="Phosphoglucose_isomerase_CS"/>
</dbReference>
<dbReference type="InterPro" id="IPR046348">
    <property type="entry name" value="SIS_dom_sf"/>
</dbReference>
<dbReference type="InterPro" id="IPR035476">
    <property type="entry name" value="SIS_PGI_1"/>
</dbReference>
<dbReference type="InterPro" id="IPR035482">
    <property type="entry name" value="SIS_PGI_2"/>
</dbReference>
<dbReference type="NCBIfam" id="NF001211">
    <property type="entry name" value="PRK00179.1"/>
    <property type="match status" value="1"/>
</dbReference>
<dbReference type="PANTHER" id="PTHR11469">
    <property type="entry name" value="GLUCOSE-6-PHOSPHATE ISOMERASE"/>
    <property type="match status" value="1"/>
</dbReference>
<dbReference type="PANTHER" id="PTHR11469:SF1">
    <property type="entry name" value="GLUCOSE-6-PHOSPHATE ISOMERASE"/>
    <property type="match status" value="1"/>
</dbReference>
<dbReference type="Pfam" id="PF00342">
    <property type="entry name" value="PGI"/>
    <property type="match status" value="1"/>
</dbReference>
<dbReference type="PRINTS" id="PR00662">
    <property type="entry name" value="G6PISOMERASE"/>
</dbReference>
<dbReference type="SUPFAM" id="SSF53697">
    <property type="entry name" value="SIS domain"/>
    <property type="match status" value="1"/>
</dbReference>
<dbReference type="PROSITE" id="PS00765">
    <property type="entry name" value="P_GLUCOSE_ISOMERASE_1"/>
    <property type="match status" value="1"/>
</dbReference>
<dbReference type="PROSITE" id="PS00174">
    <property type="entry name" value="P_GLUCOSE_ISOMERASE_2"/>
    <property type="match status" value="1"/>
</dbReference>
<dbReference type="PROSITE" id="PS51463">
    <property type="entry name" value="P_GLUCOSE_ISOMERASE_3"/>
    <property type="match status" value="1"/>
</dbReference>
<protein>
    <recommendedName>
        <fullName evidence="1">Glucose-6-phosphate isomerase 2</fullName>
        <shortName evidence="1">GPI 2</shortName>
        <ecNumber evidence="1">5.3.1.9</ecNumber>
    </recommendedName>
    <alternativeName>
        <fullName evidence="1">Phosphoglucose isomerase 2</fullName>
        <shortName evidence="1">PGI 2</shortName>
    </alternativeName>
    <alternativeName>
        <fullName evidence="1">Phosphohexose isomerase 2</fullName>
        <shortName evidence="1">PHI 2</shortName>
    </alternativeName>
</protein>
<sequence>MSQSTMIHHSEAWQALTQHADGMRNVHLKSLFAEAPGHHARFTRRGAGLTLDLSKHRWRDETLTKLLALAREANLERAIERLQNGERVNLSEDRPALHTALRLPPEASLVVEGEDVVPDVHETLARMQAMVEKCHAGQWRGATGKAITDVVNLGVGGSDLGPLMVTHALADYRPRDVHQVDIHFASTMDGSQLADYLTRFNPATTLFVLSSKSFTTIDTLSNASTARDWLMTRLADGGRDAGMREVVMRQHFIGVSAKPERMSEWGIDPRHQLRFWEWVGGRYSLWGAIGLPIALAVGMENFRELLAGAHEMDRHFRDTPLEDNLPVLLALAGIWNVNFLDVRAHSILPYDGRLEYFASYLEQLEMESNGKSVTNDGEITPYSTCPVLWGQLGPNAQHAFYQLLHQGTQAVECDFIAPVRRYDRVEDPATRAHLKAQHRLTLANCIAQSRVLMLGDEALPSDAPRPSHKRYRGNQPSTTLLLDRLTPRTLGALIALYEHKVFVQATIWDINPFDQWGVELGKQIASETEQILASRRGAETLDDSSRGLLDVVWQAQDAT</sequence>
<proteinExistence type="inferred from homology"/>
<organism>
    <name type="scientific">Chromohalobacter salexigens (strain ATCC BAA-138 / DSM 3043 / CIP 106854 / NCIMB 13768 / 1H11)</name>
    <dbReference type="NCBI Taxonomy" id="290398"/>
    <lineage>
        <taxon>Bacteria</taxon>
        <taxon>Pseudomonadati</taxon>
        <taxon>Pseudomonadota</taxon>
        <taxon>Gammaproteobacteria</taxon>
        <taxon>Oceanospirillales</taxon>
        <taxon>Halomonadaceae</taxon>
        <taxon>Chromohalobacter</taxon>
    </lineage>
</organism>
<keyword id="KW-0963">Cytoplasm</keyword>
<keyword id="KW-0312">Gluconeogenesis</keyword>
<keyword id="KW-0324">Glycolysis</keyword>
<keyword id="KW-0413">Isomerase</keyword>
<keyword id="KW-1185">Reference proteome</keyword>